<proteinExistence type="inferred from homology"/>
<name>ATPF_CELJU</name>
<keyword id="KW-0066">ATP synthesis</keyword>
<keyword id="KW-0997">Cell inner membrane</keyword>
<keyword id="KW-1003">Cell membrane</keyword>
<keyword id="KW-0138">CF(0)</keyword>
<keyword id="KW-0375">Hydrogen ion transport</keyword>
<keyword id="KW-0406">Ion transport</keyword>
<keyword id="KW-0472">Membrane</keyword>
<keyword id="KW-1185">Reference proteome</keyword>
<keyword id="KW-0812">Transmembrane</keyword>
<keyword id="KW-1133">Transmembrane helix</keyword>
<keyword id="KW-0813">Transport</keyword>
<accession>B3PIT1</accession>
<dbReference type="EMBL" id="CP000934">
    <property type="protein sequence ID" value="ACE86127.1"/>
    <property type="molecule type" value="Genomic_DNA"/>
</dbReference>
<dbReference type="RefSeq" id="WP_012489376.1">
    <property type="nucleotide sequence ID" value="NC_010995.1"/>
</dbReference>
<dbReference type="SMR" id="B3PIT1"/>
<dbReference type="STRING" id="498211.CJA_3813"/>
<dbReference type="KEGG" id="cja:CJA_3813"/>
<dbReference type="eggNOG" id="COG0711">
    <property type="taxonomic scope" value="Bacteria"/>
</dbReference>
<dbReference type="HOGENOM" id="CLU_079215_4_5_6"/>
<dbReference type="OrthoDB" id="9788020at2"/>
<dbReference type="Proteomes" id="UP000001036">
    <property type="component" value="Chromosome"/>
</dbReference>
<dbReference type="GO" id="GO:0005886">
    <property type="term" value="C:plasma membrane"/>
    <property type="evidence" value="ECO:0007669"/>
    <property type="project" value="UniProtKB-SubCell"/>
</dbReference>
<dbReference type="GO" id="GO:0045259">
    <property type="term" value="C:proton-transporting ATP synthase complex"/>
    <property type="evidence" value="ECO:0007669"/>
    <property type="project" value="UniProtKB-KW"/>
</dbReference>
<dbReference type="GO" id="GO:0046933">
    <property type="term" value="F:proton-transporting ATP synthase activity, rotational mechanism"/>
    <property type="evidence" value="ECO:0007669"/>
    <property type="project" value="UniProtKB-UniRule"/>
</dbReference>
<dbReference type="GO" id="GO:0046961">
    <property type="term" value="F:proton-transporting ATPase activity, rotational mechanism"/>
    <property type="evidence" value="ECO:0007669"/>
    <property type="project" value="TreeGrafter"/>
</dbReference>
<dbReference type="CDD" id="cd06503">
    <property type="entry name" value="ATP-synt_Fo_b"/>
    <property type="match status" value="1"/>
</dbReference>
<dbReference type="Gene3D" id="6.10.250.1580">
    <property type="match status" value="1"/>
</dbReference>
<dbReference type="HAMAP" id="MF_01398">
    <property type="entry name" value="ATP_synth_b_bprime"/>
    <property type="match status" value="1"/>
</dbReference>
<dbReference type="InterPro" id="IPR028987">
    <property type="entry name" value="ATP_synth_B-like_membr_sf"/>
</dbReference>
<dbReference type="InterPro" id="IPR002146">
    <property type="entry name" value="ATP_synth_b/b'su_bac/chlpt"/>
</dbReference>
<dbReference type="InterPro" id="IPR005864">
    <property type="entry name" value="ATP_synth_F0_bsu_bac"/>
</dbReference>
<dbReference type="InterPro" id="IPR050059">
    <property type="entry name" value="ATP_synthase_B_chain"/>
</dbReference>
<dbReference type="NCBIfam" id="TIGR01144">
    <property type="entry name" value="ATP_synt_b"/>
    <property type="match status" value="1"/>
</dbReference>
<dbReference type="NCBIfam" id="NF004411">
    <property type="entry name" value="PRK05759.1-2"/>
    <property type="match status" value="1"/>
</dbReference>
<dbReference type="PANTHER" id="PTHR33445:SF1">
    <property type="entry name" value="ATP SYNTHASE SUBUNIT B"/>
    <property type="match status" value="1"/>
</dbReference>
<dbReference type="PANTHER" id="PTHR33445">
    <property type="entry name" value="ATP SYNTHASE SUBUNIT B', CHLOROPLASTIC"/>
    <property type="match status" value="1"/>
</dbReference>
<dbReference type="Pfam" id="PF00430">
    <property type="entry name" value="ATP-synt_B"/>
    <property type="match status" value="1"/>
</dbReference>
<dbReference type="SUPFAM" id="SSF81573">
    <property type="entry name" value="F1F0 ATP synthase subunit B, membrane domain"/>
    <property type="match status" value="1"/>
</dbReference>
<comment type="function">
    <text evidence="1">F(1)F(0) ATP synthase produces ATP from ADP in the presence of a proton or sodium gradient. F-type ATPases consist of two structural domains, F(1) containing the extramembraneous catalytic core and F(0) containing the membrane proton channel, linked together by a central stalk and a peripheral stalk. During catalysis, ATP synthesis in the catalytic domain of F(1) is coupled via a rotary mechanism of the central stalk subunits to proton translocation.</text>
</comment>
<comment type="function">
    <text evidence="1">Component of the F(0) channel, it forms part of the peripheral stalk, linking F(1) to F(0).</text>
</comment>
<comment type="subunit">
    <text evidence="1">F-type ATPases have 2 components, F(1) - the catalytic core - and F(0) - the membrane proton channel. F(1) has five subunits: alpha(3), beta(3), gamma(1), delta(1), epsilon(1). F(0) has three main subunits: a(1), b(2) and c(10-14). The alpha and beta chains form an alternating ring which encloses part of the gamma chain. F(1) is attached to F(0) by a central stalk formed by the gamma and epsilon chains, while a peripheral stalk is formed by the delta and b chains.</text>
</comment>
<comment type="subcellular location">
    <subcellularLocation>
        <location evidence="1">Cell inner membrane</location>
        <topology evidence="1">Single-pass membrane protein</topology>
    </subcellularLocation>
</comment>
<comment type="similarity">
    <text evidence="1">Belongs to the ATPase B chain family.</text>
</comment>
<gene>
    <name evidence="1" type="primary">atpF</name>
    <name type="ordered locus">CJA_3813</name>
</gene>
<reference key="1">
    <citation type="journal article" date="2008" name="J. Bacteriol.">
        <title>Insights into plant cell wall degradation from the genome sequence of the soil bacterium Cellvibrio japonicus.</title>
        <authorList>
            <person name="DeBoy R.T."/>
            <person name="Mongodin E.F."/>
            <person name="Fouts D.E."/>
            <person name="Tailford L.E."/>
            <person name="Khouri H."/>
            <person name="Emerson J.B."/>
            <person name="Mohamoud Y."/>
            <person name="Watkins K."/>
            <person name="Henrissat B."/>
            <person name="Gilbert H.J."/>
            <person name="Nelson K.E."/>
        </authorList>
    </citation>
    <scope>NUCLEOTIDE SEQUENCE [LARGE SCALE GENOMIC DNA]</scope>
    <source>
        <strain>Ueda107</strain>
    </source>
</reference>
<organism>
    <name type="scientific">Cellvibrio japonicus (strain Ueda107)</name>
    <name type="common">Pseudomonas fluorescens subsp. cellulosa</name>
    <dbReference type="NCBI Taxonomy" id="498211"/>
    <lineage>
        <taxon>Bacteria</taxon>
        <taxon>Pseudomonadati</taxon>
        <taxon>Pseudomonadota</taxon>
        <taxon>Gammaproteobacteria</taxon>
        <taxon>Cellvibrionales</taxon>
        <taxon>Cellvibrionaceae</taxon>
        <taxon>Cellvibrio</taxon>
    </lineage>
</organism>
<feature type="chain" id="PRO_0000368406" description="ATP synthase subunit b">
    <location>
        <begin position="1"/>
        <end position="156"/>
    </location>
</feature>
<feature type="transmembrane region" description="Helical" evidence="1">
    <location>
        <begin position="7"/>
        <end position="26"/>
    </location>
</feature>
<sequence length="156" mass="17210">MNFNATFIGQMVAFAIFIYLTYRYVWPPIVAAMAERSKRIADGLQAADRAEKDLELAQKKVVEQLTSAKKEAAAIIDQANKRAIEIVEEAKLKAQQEAERVKASAQAEIELATSRAKEELRSKVVVLALAGAEKILESSIDQNAHNELVNKLAAEL</sequence>
<evidence type="ECO:0000255" key="1">
    <source>
        <dbReference type="HAMAP-Rule" id="MF_01398"/>
    </source>
</evidence>
<protein>
    <recommendedName>
        <fullName evidence="1">ATP synthase subunit b</fullName>
    </recommendedName>
    <alternativeName>
        <fullName evidence="1">ATP synthase F(0) sector subunit b</fullName>
    </alternativeName>
    <alternativeName>
        <fullName evidence="1">ATPase subunit I</fullName>
    </alternativeName>
    <alternativeName>
        <fullName evidence="1">F-type ATPase subunit b</fullName>
        <shortName evidence="1">F-ATPase subunit b</shortName>
    </alternativeName>
</protein>